<protein>
    <recommendedName>
        <fullName evidence="1">DNA-directed RNA polymerase subunit beta'</fullName>
        <shortName evidence="1">RNAP subunit beta'</shortName>
        <ecNumber evidence="1">2.7.7.6</ecNumber>
    </recommendedName>
    <alternativeName>
        <fullName evidence="1">RNA polymerase subunit beta'</fullName>
    </alternativeName>
    <alternativeName>
        <fullName evidence="1">Transcriptase subunit beta'</fullName>
    </alternativeName>
</protein>
<gene>
    <name evidence="1" type="primary">rpoC</name>
    <name type="ordered locus">FTM_0210</name>
</gene>
<proteinExistence type="inferred from homology"/>
<sequence length="1417" mass="157416">MNNGILHQNYNSKKFDIIKISLASPEVIRSWSHGEVKKPETINYRTFKPERDGLFCAKIFGPIKDYECLCGKYKRLKHRGVVCERCGVEVEQAKVRRERMGHIDLVCPVVHIWYLKSLPSRIGLFLDMPLKNVEKVLYFESYIVTDPGMTPLEKKQLLTDEEYAEALENYGYEFEASMGAEAIRDLLADTDIESEIELLQAECEESKSTAKKEKAIKRLRLLETFQASGNKPEWMVMTVLPVLPPDLRPLVPIEGGRFATSDLNDLYRRVINRNNRLKKLLDLNAPDIIVRNEKRMLQEAVDALLDNGRRGRAVTGSNKRPLKSLADMIKGKQGRFRQNLLGKRVDYSGRSVITVGPSLRLHECGLPKKMALELFKPFVYSKLRLGGHATTIKQAKRMVELEEAVVWDILETVINEHPVLLNRAPTLHRLGIQAFEPRLIEGKAIQLHPLVCAAFNADFDGDQMAVHVPLTVESQLEARVLMMSTNNILSPASGQPIITPTQDIVLGLYYITREKEGARGEGKLFSSYEDVSRAYNSGTIDIHAKIKLRIDRQVFDTKGNTYNEKGVVNTTVGRALLLNILPEGLSFSLLNKVLVKKEISKIINQAFRVLGGKATVVLADKLMYAGFKYSTLSGVSVGVDDMTIPDNKEAKIEEAEKEIKQITEQYQSSLITENERYNNIINIWSKTSDEVGASMMDAISKDTVSINGEKKEIESFNSVYMMAKSGARGSYNQMRQLAGMRGLMAKPDGTMIETAITANFREGLSVLQYFTSTHGARKGLADTALKTANAGYLTRRLVDVAQDLVVIEEDCGTDDGLMFSAIVEDGEVKVPLVERALGRTLAADVVTEKGVVLLEAGTLLDENLVELLDDNGIDMIKVRSPITCKTRRGLCAKCYGRDLARERQVNVGESVGVIAAQSIGEPGTQLTMRTFHTGGAASLGITVSDIKVKTAGKIKFKNIRTVTNKEGQEIVISRAGEIIVSDTMGRVREQHKIPMGAVVPLASGKAVEIGDVIATWDPHAQPLITDVAGKVVLEDVIDGITSKHTYDDLTGQQTIEITSISQRTTSKNLKPVVKIVDEKGAKLKSIPLAVGAVLNVADDSILEVGDIVAKIPLEGSKNKDITGGLPRVAELFEARRPKDAAILSPCDGMVRLGNRDTKEKQRIEIIDKNGHIVEEILLPKSRHLVVFDGEQVSRGDVLADGPTDPHDLLKYKGLEEFADYILIEAQSVYRMQGVVINDKHIETIVRQMLRKAVILDEGDSKFVKDESIELVRILEENDKLRKQGKKEVEYELVLMGITRSSLSTESFLSAASFQETTRVLTEASINSQIDNLRGLKENVLIGRLIPTGTGLAVRKESAKIEKMREELGVEDNMVFTDLSSFNPEEISFDSIQSQKEDKDINEDIEESLRNALESLDF</sequence>
<comment type="function">
    <text evidence="1">DNA-dependent RNA polymerase catalyzes the transcription of DNA into RNA using the four ribonucleoside triphosphates as substrates.</text>
</comment>
<comment type="catalytic activity">
    <reaction evidence="1">
        <text>RNA(n) + a ribonucleoside 5'-triphosphate = RNA(n+1) + diphosphate</text>
        <dbReference type="Rhea" id="RHEA:21248"/>
        <dbReference type="Rhea" id="RHEA-COMP:14527"/>
        <dbReference type="Rhea" id="RHEA-COMP:17342"/>
        <dbReference type="ChEBI" id="CHEBI:33019"/>
        <dbReference type="ChEBI" id="CHEBI:61557"/>
        <dbReference type="ChEBI" id="CHEBI:140395"/>
        <dbReference type="EC" id="2.7.7.6"/>
    </reaction>
</comment>
<comment type="cofactor">
    <cofactor evidence="1">
        <name>Mg(2+)</name>
        <dbReference type="ChEBI" id="CHEBI:18420"/>
    </cofactor>
    <text evidence="1">Binds 1 Mg(2+) ion per subunit.</text>
</comment>
<comment type="cofactor">
    <cofactor evidence="1">
        <name>Zn(2+)</name>
        <dbReference type="ChEBI" id="CHEBI:29105"/>
    </cofactor>
    <text evidence="1">Binds 2 Zn(2+) ions per subunit.</text>
</comment>
<comment type="subunit">
    <text evidence="1">The RNAP catalytic core consists of 2 alpha, 1 beta, 1 beta' and 1 omega subunit. When a sigma factor is associated with the core the holoenzyme is formed, which can initiate transcription.</text>
</comment>
<comment type="similarity">
    <text evidence="1">Belongs to the RNA polymerase beta' chain family.</text>
</comment>
<name>RPOC_FRATM</name>
<dbReference type="EC" id="2.7.7.6" evidence="1"/>
<dbReference type="EMBL" id="CP000915">
    <property type="protein sequence ID" value="ACD30290.1"/>
    <property type="molecule type" value="Genomic_DNA"/>
</dbReference>
<dbReference type="SMR" id="B2SFD7"/>
<dbReference type="KEGG" id="ftm:FTM_0210"/>
<dbReference type="HOGENOM" id="CLU_000524_3_1_6"/>
<dbReference type="GO" id="GO:0000428">
    <property type="term" value="C:DNA-directed RNA polymerase complex"/>
    <property type="evidence" value="ECO:0007669"/>
    <property type="project" value="UniProtKB-KW"/>
</dbReference>
<dbReference type="GO" id="GO:0003677">
    <property type="term" value="F:DNA binding"/>
    <property type="evidence" value="ECO:0007669"/>
    <property type="project" value="UniProtKB-UniRule"/>
</dbReference>
<dbReference type="GO" id="GO:0003899">
    <property type="term" value="F:DNA-directed RNA polymerase activity"/>
    <property type="evidence" value="ECO:0007669"/>
    <property type="project" value="UniProtKB-UniRule"/>
</dbReference>
<dbReference type="GO" id="GO:0000287">
    <property type="term" value="F:magnesium ion binding"/>
    <property type="evidence" value="ECO:0007669"/>
    <property type="project" value="UniProtKB-UniRule"/>
</dbReference>
<dbReference type="GO" id="GO:0008270">
    <property type="term" value="F:zinc ion binding"/>
    <property type="evidence" value="ECO:0007669"/>
    <property type="project" value="UniProtKB-UniRule"/>
</dbReference>
<dbReference type="GO" id="GO:0006351">
    <property type="term" value="P:DNA-templated transcription"/>
    <property type="evidence" value="ECO:0007669"/>
    <property type="project" value="UniProtKB-UniRule"/>
</dbReference>
<dbReference type="CDD" id="cd02655">
    <property type="entry name" value="RNAP_beta'_C"/>
    <property type="match status" value="1"/>
</dbReference>
<dbReference type="CDD" id="cd01609">
    <property type="entry name" value="RNAP_beta'_N"/>
    <property type="match status" value="1"/>
</dbReference>
<dbReference type="FunFam" id="1.10.132.30:FF:000003">
    <property type="entry name" value="DNA-directed RNA polymerase subunit beta"/>
    <property type="match status" value="1"/>
</dbReference>
<dbReference type="Gene3D" id="1.10.132.30">
    <property type="match status" value="1"/>
</dbReference>
<dbReference type="Gene3D" id="1.10.150.390">
    <property type="match status" value="1"/>
</dbReference>
<dbReference type="Gene3D" id="1.10.1790.20">
    <property type="match status" value="1"/>
</dbReference>
<dbReference type="Gene3D" id="1.10.40.90">
    <property type="match status" value="1"/>
</dbReference>
<dbReference type="Gene3D" id="2.40.40.20">
    <property type="match status" value="1"/>
</dbReference>
<dbReference type="Gene3D" id="2.40.50.100">
    <property type="match status" value="3"/>
</dbReference>
<dbReference type="Gene3D" id="4.10.860.120">
    <property type="entry name" value="RNA polymerase II, clamp domain"/>
    <property type="match status" value="1"/>
</dbReference>
<dbReference type="Gene3D" id="1.10.274.100">
    <property type="entry name" value="RNA polymerase Rpb1, domain 3"/>
    <property type="match status" value="1"/>
</dbReference>
<dbReference type="HAMAP" id="MF_01322">
    <property type="entry name" value="RNApol_bact_RpoC"/>
    <property type="match status" value="1"/>
</dbReference>
<dbReference type="InterPro" id="IPR045867">
    <property type="entry name" value="DNA-dir_RpoC_beta_prime"/>
</dbReference>
<dbReference type="InterPro" id="IPR012754">
    <property type="entry name" value="DNA-dir_RpoC_beta_prime_bact"/>
</dbReference>
<dbReference type="InterPro" id="IPR000722">
    <property type="entry name" value="RNA_pol_asu"/>
</dbReference>
<dbReference type="InterPro" id="IPR006592">
    <property type="entry name" value="RNA_pol_N"/>
</dbReference>
<dbReference type="InterPro" id="IPR007080">
    <property type="entry name" value="RNA_pol_Rpb1_1"/>
</dbReference>
<dbReference type="InterPro" id="IPR007066">
    <property type="entry name" value="RNA_pol_Rpb1_3"/>
</dbReference>
<dbReference type="InterPro" id="IPR042102">
    <property type="entry name" value="RNA_pol_Rpb1_3_sf"/>
</dbReference>
<dbReference type="InterPro" id="IPR007083">
    <property type="entry name" value="RNA_pol_Rpb1_4"/>
</dbReference>
<dbReference type="InterPro" id="IPR007081">
    <property type="entry name" value="RNA_pol_Rpb1_5"/>
</dbReference>
<dbReference type="InterPro" id="IPR044893">
    <property type="entry name" value="RNA_pol_Rpb1_clamp_domain"/>
</dbReference>
<dbReference type="InterPro" id="IPR038120">
    <property type="entry name" value="Rpb1_funnel_sf"/>
</dbReference>
<dbReference type="NCBIfam" id="TIGR02386">
    <property type="entry name" value="rpoC_TIGR"/>
    <property type="match status" value="1"/>
</dbReference>
<dbReference type="PANTHER" id="PTHR19376">
    <property type="entry name" value="DNA-DIRECTED RNA POLYMERASE"/>
    <property type="match status" value="1"/>
</dbReference>
<dbReference type="PANTHER" id="PTHR19376:SF54">
    <property type="entry name" value="DNA-DIRECTED RNA POLYMERASE SUBUNIT BETA"/>
    <property type="match status" value="1"/>
</dbReference>
<dbReference type="Pfam" id="PF04997">
    <property type="entry name" value="RNA_pol_Rpb1_1"/>
    <property type="match status" value="1"/>
</dbReference>
<dbReference type="Pfam" id="PF00623">
    <property type="entry name" value="RNA_pol_Rpb1_2"/>
    <property type="match status" value="2"/>
</dbReference>
<dbReference type="Pfam" id="PF04983">
    <property type="entry name" value="RNA_pol_Rpb1_3"/>
    <property type="match status" value="1"/>
</dbReference>
<dbReference type="Pfam" id="PF05000">
    <property type="entry name" value="RNA_pol_Rpb1_4"/>
    <property type="match status" value="1"/>
</dbReference>
<dbReference type="Pfam" id="PF04998">
    <property type="entry name" value="RNA_pol_Rpb1_5"/>
    <property type="match status" value="1"/>
</dbReference>
<dbReference type="SMART" id="SM00663">
    <property type="entry name" value="RPOLA_N"/>
    <property type="match status" value="1"/>
</dbReference>
<dbReference type="SUPFAM" id="SSF64484">
    <property type="entry name" value="beta and beta-prime subunits of DNA dependent RNA-polymerase"/>
    <property type="match status" value="1"/>
</dbReference>
<organism>
    <name type="scientific">Francisella tularensis subsp. mediasiatica (strain FSC147)</name>
    <dbReference type="NCBI Taxonomy" id="441952"/>
    <lineage>
        <taxon>Bacteria</taxon>
        <taxon>Pseudomonadati</taxon>
        <taxon>Pseudomonadota</taxon>
        <taxon>Gammaproteobacteria</taxon>
        <taxon>Thiotrichales</taxon>
        <taxon>Francisellaceae</taxon>
        <taxon>Francisella</taxon>
    </lineage>
</organism>
<keyword id="KW-0240">DNA-directed RNA polymerase</keyword>
<keyword id="KW-0460">Magnesium</keyword>
<keyword id="KW-0479">Metal-binding</keyword>
<keyword id="KW-0548">Nucleotidyltransferase</keyword>
<keyword id="KW-0804">Transcription</keyword>
<keyword id="KW-0808">Transferase</keyword>
<keyword id="KW-0862">Zinc</keyword>
<reference key="1">
    <citation type="journal article" date="2009" name="PLoS Pathog.">
        <title>Molecular evolutionary consequences of niche restriction in Francisella tularensis, a facultative intracellular pathogen.</title>
        <authorList>
            <person name="Larsson P."/>
            <person name="Elfsmark D."/>
            <person name="Svensson K."/>
            <person name="Wikstroem P."/>
            <person name="Forsman M."/>
            <person name="Brettin T."/>
            <person name="Keim P."/>
            <person name="Johansson A."/>
        </authorList>
    </citation>
    <scope>NUCLEOTIDE SEQUENCE [LARGE SCALE GENOMIC DNA]</scope>
    <source>
        <strain>FSC147</strain>
    </source>
</reference>
<feature type="chain" id="PRO_0000353369" description="DNA-directed RNA polymerase subunit beta'">
    <location>
        <begin position="1"/>
        <end position="1417"/>
    </location>
</feature>
<feature type="binding site" evidence="1">
    <location>
        <position position="68"/>
    </location>
    <ligand>
        <name>Zn(2+)</name>
        <dbReference type="ChEBI" id="CHEBI:29105"/>
        <label>1</label>
    </ligand>
</feature>
<feature type="binding site" evidence="1">
    <location>
        <position position="70"/>
    </location>
    <ligand>
        <name>Zn(2+)</name>
        <dbReference type="ChEBI" id="CHEBI:29105"/>
        <label>1</label>
    </ligand>
</feature>
<feature type="binding site" evidence="1">
    <location>
        <position position="83"/>
    </location>
    <ligand>
        <name>Zn(2+)</name>
        <dbReference type="ChEBI" id="CHEBI:29105"/>
        <label>1</label>
    </ligand>
</feature>
<feature type="binding site" evidence="1">
    <location>
        <position position="86"/>
    </location>
    <ligand>
        <name>Zn(2+)</name>
        <dbReference type="ChEBI" id="CHEBI:29105"/>
        <label>1</label>
    </ligand>
</feature>
<feature type="binding site" evidence="1">
    <location>
        <position position="458"/>
    </location>
    <ligand>
        <name>Mg(2+)</name>
        <dbReference type="ChEBI" id="CHEBI:18420"/>
    </ligand>
</feature>
<feature type="binding site" evidence="1">
    <location>
        <position position="460"/>
    </location>
    <ligand>
        <name>Mg(2+)</name>
        <dbReference type="ChEBI" id="CHEBI:18420"/>
    </ligand>
</feature>
<feature type="binding site" evidence="1">
    <location>
        <position position="462"/>
    </location>
    <ligand>
        <name>Mg(2+)</name>
        <dbReference type="ChEBI" id="CHEBI:18420"/>
    </ligand>
</feature>
<feature type="binding site" evidence="1">
    <location>
        <position position="811"/>
    </location>
    <ligand>
        <name>Zn(2+)</name>
        <dbReference type="ChEBI" id="CHEBI:29105"/>
        <label>2</label>
    </ligand>
</feature>
<feature type="binding site" evidence="1">
    <location>
        <position position="884"/>
    </location>
    <ligand>
        <name>Zn(2+)</name>
        <dbReference type="ChEBI" id="CHEBI:29105"/>
        <label>2</label>
    </ligand>
</feature>
<feature type="binding site" evidence="1">
    <location>
        <position position="891"/>
    </location>
    <ligand>
        <name>Zn(2+)</name>
        <dbReference type="ChEBI" id="CHEBI:29105"/>
        <label>2</label>
    </ligand>
</feature>
<feature type="binding site" evidence="1">
    <location>
        <position position="894"/>
    </location>
    <ligand>
        <name>Zn(2+)</name>
        <dbReference type="ChEBI" id="CHEBI:29105"/>
        <label>2</label>
    </ligand>
</feature>
<accession>B2SFD7</accession>
<evidence type="ECO:0000255" key="1">
    <source>
        <dbReference type="HAMAP-Rule" id="MF_01322"/>
    </source>
</evidence>